<proteinExistence type="evidence at protein level"/>
<sequence>GSSGMIPFPRV</sequence>
<reference key="1">
    <citation type="journal article" date="2000" name="Eur. J. Biochem.">
        <title>Identification of novel periviscerokinins from single neurohaemal release sites in insects. MS/MS fragmentation complemented by Edman degradation.</title>
        <authorList>
            <person name="Predel R."/>
            <person name="Kellner R."/>
            <person name="Baggerman G."/>
            <person name="Steinmetzer T."/>
            <person name="Schoofs L."/>
        </authorList>
    </citation>
    <scope>PROTEIN SEQUENCE</scope>
    <scope>FUNCTION</scope>
    <scope>MASS SPECTROMETRY</scope>
    <scope>AMIDATION AT VAL-11</scope>
    <source>
        <tissue>Abdominal perisympathetic organs</tissue>
    </source>
</reference>
<reference key="2">
    <citation type="journal article" date="2009" name="BMC Evol. Biol.">
        <title>A proteomic approach for studying insect phylogeny: CAPA peptides of ancient insect taxa (Dictyoptera, Blattoptera) as a test case.</title>
        <authorList>
            <person name="Roth S."/>
            <person name="Fromm B."/>
            <person name="Gaede G."/>
            <person name="Predel R."/>
        </authorList>
    </citation>
    <scope>PROTEIN SEQUENCE</scope>
    <scope>AMIDATION AT VAL-11</scope>
    <source>
        <tissue>Abdominal perisympathetic organs</tissue>
    </source>
</reference>
<organism>
    <name type="scientific">Rhyparobia maderae</name>
    <name type="common">Madeira cockroach</name>
    <name type="synonym">Leucophaea maderae</name>
    <dbReference type="NCBI Taxonomy" id="36963"/>
    <lineage>
        <taxon>Eukaryota</taxon>
        <taxon>Metazoa</taxon>
        <taxon>Ecdysozoa</taxon>
        <taxon>Arthropoda</taxon>
        <taxon>Hexapoda</taxon>
        <taxon>Insecta</taxon>
        <taxon>Pterygota</taxon>
        <taxon>Neoptera</taxon>
        <taxon>Polyneoptera</taxon>
        <taxon>Dictyoptera</taxon>
        <taxon>Blattodea</taxon>
        <taxon>Blaberoidea</taxon>
        <taxon>Blaberidae</taxon>
        <taxon>Oxyhaloinae</taxon>
        <taxon>Rhyparobia</taxon>
    </lineage>
</organism>
<name>PVK3_RHYMA</name>
<dbReference type="GO" id="GO:0005576">
    <property type="term" value="C:extracellular region"/>
    <property type="evidence" value="ECO:0000314"/>
    <property type="project" value="UniProtKB"/>
</dbReference>
<dbReference type="GO" id="GO:0007218">
    <property type="term" value="P:neuropeptide signaling pathway"/>
    <property type="evidence" value="ECO:0007669"/>
    <property type="project" value="UniProtKB-KW"/>
</dbReference>
<dbReference type="GO" id="GO:0006940">
    <property type="term" value="P:regulation of smooth muscle contraction"/>
    <property type="evidence" value="ECO:0000314"/>
    <property type="project" value="UniProtKB"/>
</dbReference>
<dbReference type="InterPro" id="IPR013231">
    <property type="entry name" value="Periviscerokinin"/>
</dbReference>
<dbReference type="Pfam" id="PF08259">
    <property type="entry name" value="Periviscerokin"/>
    <property type="match status" value="1"/>
</dbReference>
<feature type="peptide" id="PRO_0000044287" description="Periviscerokinin-3">
    <location>
        <begin position="1"/>
        <end position="11"/>
    </location>
</feature>
<feature type="modified residue" description="Valine amide" evidence="1 2">
    <location>
        <position position="11"/>
    </location>
</feature>
<protein>
    <recommendedName>
        <fullName>Periviscerokinin-3</fullName>
        <shortName>Lem-PVK-3</shortName>
        <shortName>RhyMa-PVK-3</shortName>
    </recommendedName>
</protein>
<accession>P83931</accession>
<accession>P82700</accession>
<accession>P85768</accession>
<keyword id="KW-0027">Amidation</keyword>
<keyword id="KW-0903">Direct protein sequencing</keyword>
<keyword id="KW-0527">Neuropeptide</keyword>
<keyword id="KW-0964">Secreted</keyword>
<comment type="function">
    <text evidence="1">Mediates visceral muscle contractile activity (myotropic activity).</text>
</comment>
<comment type="subcellular location">
    <subcellularLocation>
        <location>Secreted</location>
    </subcellularLocation>
</comment>
<comment type="mass spectrometry"/>
<comment type="similarity">
    <text evidence="3">Belongs to the periviscerokinin family.</text>
</comment>
<evidence type="ECO:0000269" key="1">
    <source>
    </source>
</evidence>
<evidence type="ECO:0000269" key="2">
    <source>
    </source>
</evidence>
<evidence type="ECO:0000305" key="3"/>